<accession>Q9NZD8</accession>
<accession>B4DW44</accession>
<accession>Q6ZMB6</accession>
<evidence type="ECO:0000255" key="1"/>
<evidence type="ECO:0000269" key="2">
    <source>
    </source>
</evidence>
<evidence type="ECO:0000269" key="3">
    <source>
    </source>
</evidence>
<evidence type="ECO:0000269" key="4">
    <source>
    </source>
</evidence>
<evidence type="ECO:0000303" key="5">
    <source>
    </source>
</evidence>
<evidence type="ECO:0000305" key="6"/>
<evidence type="ECO:0007744" key="7">
    <source>
    </source>
</evidence>
<name>SPG21_HUMAN</name>
<keyword id="KW-0025">Alternative splicing</keyword>
<keyword id="KW-0963">Cytoplasm</keyword>
<keyword id="KW-0967">Endosome</keyword>
<keyword id="KW-0333">Golgi apparatus</keyword>
<keyword id="KW-0890">Hereditary spastic paraplegia</keyword>
<keyword id="KW-0472">Membrane</keyword>
<keyword id="KW-0523">Neurodegeneration</keyword>
<keyword id="KW-0597">Phosphoprotein</keyword>
<keyword id="KW-1267">Proteomics identification</keyword>
<keyword id="KW-1185">Reference proteome</keyword>
<comment type="function">
    <text evidence="2">May play a role as a negative regulatory factor in CD4-dependent T-cell activation.</text>
</comment>
<comment type="subunit">
    <text evidence="2 4">Interacts with CD4. Interacts with ALDH16A1.</text>
</comment>
<comment type="interaction">
    <interactant intactId="EBI-742688">
        <id>Q9NZD8</id>
    </interactant>
    <interactant intactId="EBI-1045357">
        <id>Q9NPJ3</id>
        <label>ACOT13</label>
    </interactant>
    <organismsDiffer>false</organismsDiffer>
    <experiments>3</experiments>
</comment>
<comment type="interaction">
    <interactant intactId="EBI-742688">
        <id>Q9NZD8</id>
    </interactant>
    <interactant intactId="EBI-741181">
        <id>Q6RW13</id>
        <label>AGTRAP</label>
    </interactant>
    <organismsDiffer>false</organismsDiffer>
    <experiments>5</experiments>
</comment>
<comment type="interaction">
    <interactant intactId="EBI-742688">
        <id>Q9NZD8</id>
    </interactant>
    <interactant intactId="EBI-11522760">
        <id>Q6RW13-2</id>
        <label>AGTRAP</label>
    </interactant>
    <organismsDiffer>false</organismsDiffer>
    <experiments>3</experiments>
</comment>
<comment type="interaction">
    <interactant intactId="EBI-742688">
        <id>Q9NZD8</id>
    </interactant>
    <interactant intactId="EBI-742928">
        <id>Q53H80</id>
        <label>AKIRIN2</label>
    </interactant>
    <organismsDiffer>false</organismsDiffer>
    <experiments>12</experiments>
</comment>
<comment type="interaction">
    <interactant intactId="EBI-742688">
        <id>Q9NZD8</id>
    </interactant>
    <interactant intactId="EBI-1220105">
        <id>P02654</id>
        <label>APOC1</label>
    </interactant>
    <organismsDiffer>false</organismsDiffer>
    <experiments>3</experiments>
</comment>
<comment type="interaction">
    <interactant intactId="EBI-742688">
        <id>Q9NZD8</id>
    </interactant>
    <interactant intactId="EBI-714543">
        <id>Q15041</id>
        <label>ARL6IP1</label>
    </interactant>
    <organismsDiffer>false</organismsDiffer>
    <experiments>6</experiments>
</comment>
<comment type="interaction">
    <interactant intactId="EBI-742688">
        <id>Q9NZD8</id>
    </interactant>
    <interactant intactId="EBI-4401082">
        <id>Q96BM9</id>
        <label>ARL8A</label>
    </interactant>
    <organismsDiffer>false</organismsDiffer>
    <experiments>4</experiments>
</comment>
<comment type="interaction">
    <interactant intactId="EBI-742688">
        <id>Q9NZD8</id>
    </interactant>
    <interactant intactId="EBI-36513937">
        <id>Q5T9G4-2</id>
        <label>ARMC12</label>
    </interactant>
    <organismsDiffer>false</organismsDiffer>
    <experiments>3</experiments>
</comment>
<comment type="interaction">
    <interactant intactId="EBI-742688">
        <id>Q9NZD8</id>
    </interactant>
    <interactant intactId="EBI-742909">
        <id>Q9H6L4</id>
        <label>ARMC7</label>
    </interactant>
    <organismsDiffer>false</organismsDiffer>
    <experiments>3</experiments>
</comment>
<comment type="interaction">
    <interactant intactId="EBI-742688">
        <id>Q9NZD8</id>
    </interactant>
    <interactant intactId="EBI-2270000">
        <id>P56385</id>
        <label>ATP5ME</label>
    </interactant>
    <organismsDiffer>false</organismsDiffer>
    <experiments>3</experiments>
</comment>
<comment type="interaction">
    <interactant intactId="EBI-742688">
        <id>Q9NZD8</id>
    </interactant>
    <interactant intactId="EBI-1166928">
        <id>Q8N5M1</id>
        <label>ATPAF2</label>
    </interactant>
    <organismsDiffer>false</organismsDiffer>
    <experiments>20</experiments>
</comment>
<comment type="interaction">
    <interactant intactId="EBI-742688">
        <id>Q9NZD8</id>
    </interactant>
    <interactant intactId="EBI-10193358">
        <id>Q96GS4</id>
        <label>BORCS6</label>
    </interactant>
    <organismsDiffer>false</organismsDiffer>
    <experiments>3</experiments>
</comment>
<comment type="interaction">
    <interactant intactId="EBI-742688">
        <id>Q9NZD8</id>
    </interactant>
    <interactant intactId="EBI-7996695">
        <id>Q8WZ55</id>
        <label>BSND</label>
    </interactant>
    <organismsDiffer>false</organismsDiffer>
    <experiments>3</experiments>
</comment>
<comment type="interaction">
    <interactant intactId="EBI-742688">
        <id>Q9NZD8</id>
    </interactant>
    <interactant intactId="EBI-10171570">
        <id>Q68D86</id>
        <label>CCDC102B</label>
    </interactant>
    <organismsDiffer>false</organismsDiffer>
    <experiments>6</experiments>
</comment>
<comment type="interaction">
    <interactant intactId="EBI-742688">
        <id>Q9NZD8</id>
    </interactant>
    <interactant intactId="EBI-10175300">
        <id>Q8TD31-3</id>
        <label>CCHCR1</label>
    </interactant>
    <organismsDiffer>false</organismsDiffer>
    <experiments>3</experiments>
</comment>
<comment type="interaction">
    <interactant intactId="EBI-742688">
        <id>Q9NZD8</id>
    </interactant>
    <interactant intactId="EBI-1052532">
        <id>O14519</id>
        <label>CDK2AP1</label>
    </interactant>
    <organismsDiffer>false</organismsDiffer>
    <experiments>3</experiments>
</comment>
<comment type="interaction">
    <interactant intactId="EBI-742688">
        <id>Q9NZD8</id>
    </interactant>
    <interactant intactId="EBI-711280">
        <id>P42772</id>
        <label>CDKN2B</label>
    </interactant>
    <organismsDiffer>false</organismsDiffer>
    <experiments>6</experiments>
</comment>
<comment type="interaction">
    <interactant intactId="EBI-742688">
        <id>Q9NZD8</id>
    </interactant>
    <interactant intactId="EBI-742887">
        <id>Q8TAP6</id>
        <label>CEP76</label>
    </interactant>
    <organismsDiffer>false</organismsDiffer>
    <experiments>3</experiments>
</comment>
<comment type="interaction">
    <interactant intactId="EBI-742688">
        <id>Q9NZD8</id>
    </interactant>
    <interactant intactId="EBI-1237183">
        <id>Q9Y6K0</id>
        <label>CEPT1</label>
    </interactant>
    <organismsDiffer>false</organismsDiffer>
    <experiments>3</experiments>
</comment>
<comment type="interaction">
    <interactant intactId="EBI-742688">
        <id>Q9NZD8</id>
    </interactant>
    <interactant intactId="EBI-11943144">
        <id>O43822-4</id>
        <label>CFAP410</label>
    </interactant>
    <organismsDiffer>false</organismsDiffer>
    <experiments>3</experiments>
</comment>
<comment type="interaction">
    <interactant intactId="EBI-742688">
        <id>Q9NZD8</id>
    </interactant>
    <interactant intactId="EBI-7062247">
        <id>Q9UHD4</id>
        <label>CIDEB</label>
    </interactant>
    <organismsDiffer>false</organismsDiffer>
    <experiments>3</experiments>
</comment>
<comment type="interaction">
    <interactant intactId="EBI-742688">
        <id>Q9NZD8</id>
    </interactant>
    <interactant intactId="EBI-17766761">
        <id>Q8N7P3</id>
        <label>CLDN22</label>
    </interactant>
    <organismsDiffer>false</organismsDiffer>
    <experiments>3</experiments>
</comment>
<comment type="interaction">
    <interactant intactId="EBI-742688">
        <id>Q9NZD8</id>
    </interactant>
    <interactant intactId="EBI-17278014">
        <id>Q8IZR5-2</id>
        <label>CMTM4</label>
    </interactant>
    <organismsDiffer>false</organismsDiffer>
    <experiments>3</experiments>
</comment>
<comment type="interaction">
    <interactant intactId="EBI-742688">
        <id>Q9NZD8</id>
    </interactant>
    <interactant intactId="EBI-2548702">
        <id>Q96DZ9</id>
        <label>CMTM5</label>
    </interactant>
    <organismsDiffer>false</organismsDiffer>
    <experiments>3</experiments>
</comment>
<comment type="interaction">
    <interactant intactId="EBI-742688">
        <id>Q9NZD8</id>
    </interactant>
    <interactant intactId="EBI-11522780">
        <id>Q96DZ9-2</id>
        <label>CMTM5</label>
    </interactant>
    <organismsDiffer>false</organismsDiffer>
    <experiments>3</experiments>
</comment>
<comment type="interaction">
    <interactant intactId="EBI-742688">
        <id>Q9NZD8</id>
    </interactant>
    <interactant intactId="EBI-1054315">
        <id>Q9NX76</id>
        <label>CMTM6</label>
    </interactant>
    <organismsDiffer>false</organismsDiffer>
    <experiments>3</experiments>
</comment>
<comment type="interaction">
    <interactant intactId="EBI-742688">
        <id>Q9NZD8</id>
    </interactant>
    <interactant intactId="EBI-9091495">
        <id>Q96JB2-2</id>
        <label>COG3</label>
    </interactant>
    <organismsDiffer>false</organismsDiffer>
    <experiments>3</experiments>
</comment>
<comment type="interaction">
    <interactant intactId="EBI-742688">
        <id>Q9NZD8</id>
    </interactant>
    <interactant intactId="EBI-3866319">
        <id>Q9Y2V7</id>
        <label>COG6</label>
    </interactant>
    <organismsDiffer>false</organismsDiffer>
    <experiments>3</experiments>
</comment>
<comment type="interaction">
    <interactant intactId="EBI-742688">
        <id>Q9NZD8</id>
    </interactant>
    <interactant intactId="EBI-11523759">
        <id>Q8N684-3</id>
        <label>CPSF7</label>
    </interactant>
    <organismsDiffer>false</organismsDiffer>
    <experiments>3</experiments>
</comment>
<comment type="interaction">
    <interactant intactId="EBI-742688">
        <id>Q9NZD8</id>
    </interactant>
    <interactant intactId="EBI-748171">
        <id>O43186</id>
        <label>CRX</label>
    </interactant>
    <organismsDiffer>false</organismsDiffer>
    <experiments>3</experiments>
</comment>
<comment type="interaction">
    <interactant intactId="EBI-742688">
        <id>Q9NZD8</id>
    </interactant>
    <interactant intactId="EBI-6875961">
        <id>P02489</id>
        <label>CRYAA</label>
    </interactant>
    <organismsDiffer>false</organismsDiffer>
    <experiments>7</experiments>
</comment>
<comment type="interaction">
    <interactant intactId="EBI-742688">
        <id>Q9NZD8</id>
    </interactant>
    <interactant intactId="EBI-6873363">
        <id>Q8WUE5</id>
        <label>CT55</label>
    </interactant>
    <organismsDiffer>false</organismsDiffer>
    <experiments>3</experiments>
</comment>
<comment type="interaction">
    <interactant intactId="EBI-742688">
        <id>Q9NZD8</id>
    </interactant>
    <interactant intactId="EBI-12180013">
        <id>O43310-2</id>
        <label>CTIF</label>
    </interactant>
    <organismsDiffer>false</organismsDiffer>
    <experiments>3</experiments>
</comment>
<comment type="interaction">
    <interactant intactId="EBI-742688">
        <id>Q9NZD8</id>
    </interactant>
    <interactant intactId="EBI-740874">
        <id>Q9NRF8</id>
        <label>CTPS2</label>
    </interactant>
    <organismsDiffer>false</organismsDiffer>
    <experiments>4</experiments>
</comment>
<comment type="interaction">
    <interactant intactId="EBI-742688">
        <id>Q9NZD8</id>
    </interactant>
    <interactant intactId="EBI-714918">
        <id>Q9NTM9</id>
        <label>CUTC</label>
    </interactant>
    <organismsDiffer>false</organismsDiffer>
    <experiments>8</experiments>
</comment>
<comment type="interaction">
    <interactant intactId="EBI-742688">
        <id>Q9NZD8</id>
    </interactant>
    <interactant intactId="EBI-723569">
        <id>Q9H773</id>
        <label>DCTPP1</label>
    </interactant>
    <organismsDiffer>false</organismsDiffer>
    <experiments>3</experiments>
</comment>
<comment type="interaction">
    <interactant intactId="EBI-742688">
        <id>Q9NZD8</id>
    </interactant>
    <interactant intactId="EBI-11974185">
        <id>Q494R4-2</id>
        <label>DRC12</label>
    </interactant>
    <organismsDiffer>false</organismsDiffer>
    <experiments>3</experiments>
</comment>
<comment type="interaction">
    <interactant intactId="EBI-742688">
        <id>Q9NZD8</id>
    </interactant>
    <interactant intactId="EBI-740376">
        <id>Q86UW9</id>
        <label>DTX2</label>
    </interactant>
    <organismsDiffer>false</organismsDiffer>
    <experiments>7</experiments>
</comment>
<comment type="interaction">
    <interactant intactId="EBI-742688">
        <id>Q9NZD8</id>
    </interactant>
    <interactant intactId="EBI-2340392">
        <id>Q8TDB6</id>
        <label>DTX3L</label>
    </interactant>
    <organismsDiffer>false</organismsDiffer>
    <experiments>10</experiments>
</comment>
<comment type="interaction">
    <interactant intactId="EBI-742688">
        <id>Q9NZD8</id>
    </interactant>
    <interactant intactId="EBI-2349927">
        <id>Q5JST6</id>
        <label>EFHC2</label>
    </interactant>
    <organismsDiffer>false</organismsDiffer>
    <experiments>6</experiments>
</comment>
<comment type="interaction">
    <interactant intactId="EBI-742688">
        <id>Q9NZD8</id>
    </interactant>
    <interactant intactId="EBI-1043343">
        <id>O60739</id>
        <label>EIF1B</label>
    </interactant>
    <organismsDiffer>false</organismsDiffer>
    <experiments>3</experiments>
</comment>
<comment type="interaction">
    <interactant intactId="EBI-742688">
        <id>Q9NZD8</id>
    </interactant>
    <interactant intactId="EBI-12222405">
        <id>Q15056-2</id>
        <label>EIF4H</label>
    </interactant>
    <organismsDiffer>false</organismsDiffer>
    <experiments>6</experiments>
</comment>
<comment type="interaction">
    <interactant intactId="EBI-742688">
        <id>Q9NZD8</id>
    </interactant>
    <interactant intactId="EBI-12807776">
        <id>O00167-2</id>
        <label>EYA2</label>
    </interactant>
    <organismsDiffer>false</organismsDiffer>
    <experiments>3</experiments>
</comment>
<comment type="interaction">
    <interactant intactId="EBI-742688">
        <id>Q9NZD8</id>
    </interactant>
    <interactant intactId="EBI-2686288">
        <id>Q8IWE2</id>
        <label>FAM114A1</label>
    </interactant>
    <organismsDiffer>false</organismsDiffer>
    <experiments>7</experiments>
</comment>
<comment type="interaction">
    <interactant intactId="EBI-742688">
        <id>Q9NZD8</id>
    </interactant>
    <interactant intactId="EBI-12845222">
        <id>Q9NVL1-2</id>
        <label>FAM86C1P</label>
    </interactant>
    <organismsDiffer>false</organismsDiffer>
    <experiments>3</experiments>
</comment>
<comment type="interaction">
    <interactant intactId="EBI-742688">
        <id>Q9NZD8</id>
    </interactant>
    <interactant intactId="EBI-12104696">
        <id>Q9H4M3-2</id>
        <label>FBXO44</label>
    </interactant>
    <organismsDiffer>false</organismsDiffer>
    <experiments>3</experiments>
</comment>
<comment type="interaction">
    <interactant intactId="EBI-742688">
        <id>Q9NZD8</id>
    </interactant>
    <interactant intactId="EBI-11533409">
        <id>Q96Q35-2</id>
        <label>FLACC1</label>
    </interactant>
    <organismsDiffer>false</organismsDiffer>
    <experiments>3</experiments>
</comment>
<comment type="interaction">
    <interactant intactId="EBI-742688">
        <id>Q9NZD8</id>
    </interactant>
    <interactant intactId="EBI-9304251">
        <id>Q05329</id>
        <label>GAD2</label>
    </interactant>
    <organismsDiffer>false</organismsDiffer>
    <experiments>3</experiments>
</comment>
<comment type="interaction">
    <interactant intactId="EBI-742688">
        <id>Q9NZD8</id>
    </interactant>
    <interactant intactId="EBI-1052570">
        <id>O95995</id>
        <label>GAS8</label>
    </interactant>
    <organismsDiffer>false</organismsDiffer>
    <experiments>3</experiments>
</comment>
<comment type="interaction">
    <interactant intactId="EBI-742688">
        <id>Q9NZD8</id>
    </interactant>
    <interactant intactId="EBI-443648">
        <id>O14893</id>
        <label>GEMIN2</label>
    </interactant>
    <organismsDiffer>false</organismsDiffer>
    <experiments>3</experiments>
</comment>
<comment type="interaction">
    <interactant intactId="EBI-742688">
        <id>Q9NZD8</id>
    </interactant>
    <interactant intactId="EBI-356700">
        <id>P57678</id>
        <label>GEMIN4</label>
    </interactant>
    <organismsDiffer>false</organismsDiffer>
    <experiments>3</experiments>
</comment>
<comment type="interaction">
    <interactant intactId="EBI-742688">
        <id>Q9NZD8</id>
    </interactant>
    <interactant intactId="EBI-447646">
        <id>Q9UJY4</id>
        <label>GGA2</label>
    </interactant>
    <organismsDiffer>false</organismsDiffer>
    <experiments>4</experiments>
</comment>
<comment type="interaction">
    <interactant intactId="EBI-742688">
        <id>Q9NZD8</id>
    </interactant>
    <interactant intactId="EBI-618309">
        <id>Q08379</id>
        <label>GOLGA2</label>
    </interactant>
    <organismsDiffer>false</organismsDiffer>
    <experiments>3</experiments>
</comment>
<comment type="interaction">
    <interactant intactId="EBI-742688">
        <id>Q9NZD8</id>
    </interactant>
    <interactant intactId="EBI-4402607">
        <id>Q9Y3E0</id>
        <label>GOLT1B</label>
    </interactant>
    <organismsDiffer>false</organismsDiffer>
    <experiments>3</experiments>
</comment>
<comment type="interaction">
    <interactant intactId="EBI-742688">
        <id>Q9NZD8</id>
    </interactant>
    <interactant intactId="EBI-1043499">
        <id>Q9HAV7</id>
        <label>GRPEL1</label>
    </interactant>
    <organismsDiffer>false</organismsDiffer>
    <experiments>3</experiments>
</comment>
<comment type="interaction">
    <interactant intactId="EBI-742688">
        <id>Q9NZD8</id>
    </interactant>
    <interactant intactId="EBI-351590">
        <id>P31943</id>
        <label>HNRNPH1</label>
    </interactant>
    <organismsDiffer>false</organismsDiffer>
    <experiments>3</experiments>
</comment>
<comment type="interaction">
    <interactant intactId="EBI-742688">
        <id>Q9NZD8</id>
    </interactant>
    <interactant intactId="EBI-748210">
        <id>P00492</id>
        <label>HPRT1</label>
    </interactant>
    <organismsDiffer>false</organismsDiffer>
    <experiments>3</experiments>
</comment>
<comment type="interaction">
    <interactant intactId="EBI-742688">
        <id>Q9NZD8</id>
    </interactant>
    <interactant intactId="EBI-18053395">
        <id>Q7Z5P4</id>
        <label>HSD17B13</label>
    </interactant>
    <organismsDiffer>false</organismsDiffer>
    <experiments>3</experiments>
</comment>
<comment type="interaction">
    <interactant intactId="EBI-742688">
        <id>Q9NZD8</id>
    </interactant>
    <interactant intactId="EBI-747204">
        <id>Q9UKT9</id>
        <label>IKZF3</label>
    </interactant>
    <organismsDiffer>false</organismsDiffer>
    <experiments>6</experiments>
</comment>
<comment type="interaction">
    <interactant intactId="EBI-742688">
        <id>Q9NZD8</id>
    </interactant>
    <interactant intactId="EBI-6509505">
        <id>Q0VD86</id>
        <label>INCA1</label>
    </interactant>
    <organismsDiffer>false</organismsDiffer>
    <experiments>6</experiments>
</comment>
<comment type="interaction">
    <interactant intactId="EBI-742688">
        <id>Q9NZD8</id>
    </interactant>
    <interactant intactId="EBI-11944935">
        <id>Q15051-2</id>
        <label>IQCB1</label>
    </interactant>
    <organismsDiffer>false</organismsDiffer>
    <experiments>3</experiments>
</comment>
<comment type="interaction">
    <interactant intactId="EBI-742688">
        <id>Q9NZD8</id>
    </interactant>
    <interactant intactId="EBI-4397613">
        <id>Q7L273</id>
        <label>KCTD9</label>
    </interactant>
    <organismsDiffer>false</organismsDiffer>
    <experiments>3</experiments>
</comment>
<comment type="interaction">
    <interactant intactId="EBI-742688">
        <id>Q9NZD8</id>
    </interactant>
    <interactant intactId="EBI-1223876">
        <id>P13646</id>
        <label>KRT13</label>
    </interactant>
    <organismsDiffer>false</organismsDiffer>
    <experiments>3</experiments>
</comment>
<comment type="interaction">
    <interactant intactId="EBI-742688">
        <id>Q9NZD8</id>
    </interactant>
    <interactant intactId="EBI-739566">
        <id>P19012</id>
        <label>KRT15</label>
    </interactant>
    <organismsDiffer>false</organismsDiffer>
    <experiments>3</experiments>
</comment>
<comment type="interaction">
    <interactant intactId="EBI-742688">
        <id>Q9NZD8</id>
    </interactant>
    <interactant intactId="EBI-742756">
        <id>P08727</id>
        <label>KRT19</label>
    </interactant>
    <organismsDiffer>false</organismsDiffer>
    <experiments>3</experiments>
</comment>
<comment type="interaction">
    <interactant intactId="EBI-742688">
        <id>Q9NZD8</id>
    </interactant>
    <interactant intactId="EBI-948001">
        <id>Q15323</id>
        <label>KRT31</label>
    </interactant>
    <organismsDiffer>false</organismsDiffer>
    <experiments>3</experiments>
</comment>
<comment type="interaction">
    <interactant intactId="EBI-742688">
        <id>Q9NZD8</id>
    </interactant>
    <interactant intactId="EBI-750776">
        <id>O95214</id>
        <label>LEPROTL1</label>
    </interactant>
    <organismsDiffer>false</organismsDiffer>
    <experiments>3</experiments>
</comment>
<comment type="interaction">
    <interactant intactId="EBI-742688">
        <id>Q9NZD8</id>
    </interactant>
    <interactant intactId="EBI-8639312">
        <id>P25800</id>
        <label>LMO1</label>
    </interactant>
    <organismsDiffer>false</organismsDiffer>
    <experiments>3</experiments>
</comment>
<comment type="interaction">
    <interactant intactId="EBI-742688">
        <id>Q9NZD8</id>
    </interactant>
    <interactant intactId="EBI-739832">
        <id>Q8TBB1</id>
        <label>LNX1</label>
    </interactant>
    <organismsDiffer>false</organismsDiffer>
    <experiments>3</experiments>
</comment>
<comment type="interaction">
    <interactant intactId="EBI-742688">
        <id>Q9NZD8</id>
    </interactant>
    <interactant intactId="EBI-10264855">
        <id>Q8N112</id>
        <label>LSMEM2</label>
    </interactant>
    <organismsDiffer>false</organismsDiffer>
    <experiments>3</experiments>
</comment>
<comment type="interaction">
    <interactant intactId="EBI-742688">
        <id>Q9NZD8</id>
    </interactant>
    <interactant intactId="EBI-10268010">
        <id>Q8N8X9</id>
        <label>MAB21L3</label>
    </interactant>
    <organismsDiffer>false</organismsDiffer>
    <experiments>3</experiments>
</comment>
<comment type="interaction">
    <interactant intactId="EBI-742688">
        <id>Q9NZD8</id>
    </interactant>
    <interactant intactId="EBI-10172526">
        <id>Q9UJV3-2</id>
        <label>MID2</label>
    </interactant>
    <organismsDiffer>false</organismsDiffer>
    <experiments>6</experiments>
</comment>
<comment type="interaction">
    <interactant intactId="EBI-742688">
        <id>Q9NZD8</id>
    </interactant>
    <interactant intactId="EBI-719403">
        <id>O95563</id>
        <label>MPC2</label>
    </interactant>
    <organismsDiffer>false</organismsDiffer>
    <experiments>3</experiments>
</comment>
<comment type="interaction">
    <interactant intactId="EBI-742688">
        <id>Q9NZD8</id>
    </interactant>
    <interactant intactId="EBI-11522433">
        <id>Q5JR59-3</id>
        <label>MTUS2</label>
    </interactant>
    <organismsDiffer>false</organismsDiffer>
    <experiments>3</experiments>
</comment>
<comment type="interaction">
    <interactant intactId="EBI-742688">
        <id>Q9NZD8</id>
    </interactant>
    <interactant intactId="EBI-709754">
        <id>Q9HB07</id>
        <label>MYG1</label>
    </interactant>
    <organismsDiffer>false</organismsDiffer>
    <experiments>3</experiments>
</comment>
<comment type="interaction">
    <interactant intactId="EBI-742688">
        <id>Q9NZD8</id>
    </interactant>
    <interactant intactId="EBI-3906629">
        <id>P15173</id>
        <label>MYOG</label>
    </interactant>
    <organismsDiffer>false</organismsDiffer>
    <experiments>3</experiments>
</comment>
<comment type="interaction">
    <interactant intactId="EBI-742688">
        <id>Q9NZD8</id>
    </interactant>
    <interactant intactId="EBI-2512055">
        <id>O15049</id>
        <label>N4BP3</label>
    </interactant>
    <organismsDiffer>false</organismsDiffer>
    <experiments>3</experiments>
</comment>
<comment type="interaction">
    <interactant intactId="EBI-742688">
        <id>Q9NZD8</id>
    </interactant>
    <interactant intactId="EBI-8641936">
        <id>Q15742</id>
        <label>NAB2</label>
    </interactant>
    <organismsDiffer>false</organismsDiffer>
    <experiments>3</experiments>
</comment>
<comment type="interaction">
    <interactant intactId="EBI-742688">
        <id>Q9NZD8</id>
    </interactant>
    <interactant intactId="EBI-2682365">
        <id>Q8N183</id>
        <label>NDUFAF2</label>
    </interactant>
    <organismsDiffer>false</organismsDiffer>
    <experiments>3</experiments>
</comment>
<comment type="interaction">
    <interactant intactId="EBI-742688">
        <id>Q9NZD8</id>
    </interactant>
    <interactant intactId="EBI-740897">
        <id>Q9GZT8</id>
        <label>NIF3L1</label>
    </interactant>
    <organismsDiffer>false</organismsDiffer>
    <experiments>3</experiments>
</comment>
<comment type="interaction">
    <interactant intactId="EBI-742688">
        <id>Q9NZD8</id>
    </interactant>
    <interactant intactId="EBI-744871">
        <id>O00746</id>
        <label>NME4</label>
    </interactant>
    <organismsDiffer>false</organismsDiffer>
    <experiments>3</experiments>
</comment>
<comment type="interaction">
    <interactant intactId="EBI-742688">
        <id>Q9NZD8</id>
    </interactant>
    <interactant intactId="EBI-358466">
        <id>P16083</id>
        <label>NQO2</label>
    </interactant>
    <organismsDiffer>false</organismsDiffer>
    <experiments>3</experiments>
</comment>
<comment type="interaction">
    <interactant intactId="EBI-742688">
        <id>Q9NZD8</id>
    </interactant>
    <interactant intactId="EBI-2811738">
        <id>P20393</id>
        <label>NR1D1</label>
    </interactant>
    <organismsDiffer>false</organismsDiffer>
    <experiments>3</experiments>
</comment>
<comment type="interaction">
    <interactant intactId="EBI-742688">
        <id>Q9NZD8</id>
    </interactant>
    <interactant intactId="EBI-1042642">
        <id>Q9H7Z3</id>
        <label>NRDE2</label>
    </interactant>
    <organismsDiffer>false</organismsDiffer>
    <experiments>3</experiments>
</comment>
<comment type="interaction">
    <interactant intactId="EBI-742688">
        <id>Q9NZD8</id>
    </interactant>
    <interactant intactId="EBI-741048">
        <id>Q7Z3B4</id>
        <label>NUP54</label>
    </interactant>
    <organismsDiffer>false</organismsDiffer>
    <experiments>3</experiments>
</comment>
<comment type="interaction">
    <interactant intactId="EBI-742688">
        <id>Q9NZD8</id>
    </interactant>
    <interactant intactId="EBI-747278">
        <id>P26367</id>
        <label>PAX6</label>
    </interactant>
    <organismsDiffer>false</organismsDiffer>
    <experiments>3</experiments>
</comment>
<comment type="interaction">
    <interactant intactId="EBI-742688">
        <id>Q9NZD8</id>
    </interactant>
    <interactant intactId="EBI-10302990">
        <id>Q9BYU1</id>
        <label>PBX4</label>
    </interactant>
    <organismsDiffer>false</organismsDiffer>
    <experiments>3</experiments>
</comment>
<comment type="interaction">
    <interactant intactId="EBI-742688">
        <id>Q9NZD8</id>
    </interactant>
    <interactant intactId="EBI-634289">
        <id>Q9H0N5</id>
        <label>PCBD2</label>
    </interactant>
    <organismsDiffer>false</organismsDiffer>
    <experiments>3</experiments>
</comment>
<comment type="interaction">
    <interactant intactId="EBI-742688">
        <id>Q9NZD8</id>
    </interactant>
    <interactant intactId="EBI-358311">
        <id>P12004</id>
        <label>PCNA</label>
    </interactant>
    <organismsDiffer>false</organismsDiffer>
    <experiments>3</experiments>
</comment>
<comment type="interaction">
    <interactant intactId="EBI-742688">
        <id>Q9NZD8</id>
    </interactant>
    <interactant intactId="EBI-9023531">
        <id>O76074</id>
        <label>PDE5A</label>
    </interactant>
    <organismsDiffer>false</organismsDiffer>
    <experiments>3</experiments>
</comment>
<comment type="interaction">
    <interactant intactId="EBI-742688">
        <id>Q9NZD8</id>
    </interactant>
    <interactant intactId="EBI-724639">
        <id>Q9UBV8</id>
        <label>PEF1</label>
    </interactant>
    <organismsDiffer>false</organismsDiffer>
    <experiments>6</experiments>
</comment>
<comment type="interaction">
    <interactant intactId="EBI-742688">
        <id>Q9NZD8</id>
    </interactant>
    <interactant intactId="EBI-357275">
        <id>Q99471</id>
        <label>PFDN5</label>
    </interactant>
    <organismsDiffer>false</organismsDiffer>
    <experiments>3</experiments>
</comment>
<comment type="interaction">
    <interactant intactId="EBI-742688">
        <id>Q9NZD8</id>
    </interactant>
    <interactant intactId="EBI-608347">
        <id>Q04941</id>
        <label>PLP2</label>
    </interactant>
    <organismsDiffer>false</organismsDiffer>
    <experiments>3</experiments>
</comment>
<comment type="interaction">
    <interactant intactId="EBI-742688">
        <id>Q9NZD8</id>
    </interactant>
    <interactant intactId="EBI-10171633">
        <id>Q96PV4</id>
        <label>PNMA5</label>
    </interactant>
    <organismsDiffer>false</organismsDiffer>
    <experiments>3</experiments>
</comment>
<comment type="interaction">
    <interactant intactId="EBI-742688">
        <id>Q9NZD8</id>
    </interactant>
    <interactant intactId="EBI-13292717">
        <id>Q5JR12</id>
        <label>PPM1J</label>
    </interactant>
    <organismsDiffer>false</organismsDiffer>
    <experiments>3</experiments>
</comment>
<comment type="interaction">
    <interactant intactId="EBI-742688">
        <id>Q9NZD8</id>
    </interactant>
    <interactant intactId="EBI-749195">
        <id>P60891</id>
        <label>PRPS1</label>
    </interactant>
    <organismsDiffer>false</organismsDiffer>
    <experiments>8</experiments>
</comment>
<comment type="interaction">
    <interactant intactId="EBI-742688">
        <id>Q9NZD8</id>
    </interactant>
    <interactant intactId="EBI-739759">
        <id>Q9NRG1</id>
        <label>PRTFDC1</label>
    </interactant>
    <organismsDiffer>false</organismsDiffer>
    <experiments>3</experiments>
</comment>
<comment type="interaction">
    <interactant intactId="EBI-742688">
        <id>Q9NZD8</id>
    </interactant>
    <interactant intactId="EBI-603350">
        <id>P28070</id>
        <label>PSMB4</label>
    </interactant>
    <organismsDiffer>false</organismsDiffer>
    <experiments>3</experiments>
</comment>
<comment type="interaction">
    <interactant intactId="EBI-742688">
        <id>Q9NZD8</id>
    </interactant>
    <interactant intactId="EBI-12164121">
        <id>Q15257-2</id>
        <label>PTPA</label>
    </interactant>
    <organismsDiffer>false</organismsDiffer>
    <experiments>5</experiments>
</comment>
<comment type="interaction">
    <interactant intactId="EBI-742688">
        <id>Q9NZD8</id>
    </interactant>
    <interactant intactId="EBI-712367">
        <id>Q9UI14</id>
        <label>RABAC1</label>
    </interactant>
    <organismsDiffer>false</organismsDiffer>
    <experiments>7</experiments>
</comment>
<comment type="interaction">
    <interactant intactId="EBI-742688">
        <id>Q9NZD8</id>
    </interactant>
    <interactant intactId="EBI-14233893">
        <id>O43502-2</id>
        <label>RAD51C</label>
    </interactant>
    <organismsDiffer>false</organismsDiffer>
    <experiments>3</experiments>
</comment>
<comment type="interaction">
    <interactant intactId="EBI-742688">
        <id>Q9NZD8</id>
    </interactant>
    <interactant intactId="EBI-750345">
        <id>Q96HR9</id>
        <label>REEP6</label>
    </interactant>
    <organismsDiffer>false</organismsDiffer>
    <experiments>4</experiments>
</comment>
<comment type="interaction">
    <interactant intactId="EBI-742688">
        <id>Q9NZD8</id>
    </interactant>
    <interactant intactId="EBI-14065960">
        <id>Q96HR9-2</id>
        <label>REEP6</label>
    </interactant>
    <organismsDiffer>false</organismsDiffer>
    <experiments>3</experiments>
</comment>
<comment type="interaction">
    <interactant intactId="EBI-742688">
        <id>Q9NZD8</id>
    </interactant>
    <interactant intactId="EBI-10829018">
        <id>Q04864-2</id>
        <label>REL</label>
    </interactant>
    <organismsDiffer>false</organismsDiffer>
    <experiments>3</experiments>
</comment>
<comment type="interaction">
    <interactant intactId="EBI-742688">
        <id>Q9NZD8</id>
    </interactant>
    <interactant intactId="EBI-1378139">
        <id>Q9HAT0</id>
        <label>ROPN1</label>
    </interactant>
    <organismsDiffer>false</organismsDiffer>
    <experiments>3</experiments>
</comment>
<comment type="interaction">
    <interactant intactId="EBI-742688">
        <id>Q9NZD8</id>
    </interactant>
    <interactant intactId="EBI-747925">
        <id>Q9NQG5</id>
        <label>RPRD1B</label>
    </interactant>
    <organismsDiffer>false</organismsDiffer>
    <experiments>3</experiments>
</comment>
<comment type="interaction">
    <interactant intactId="EBI-742688">
        <id>Q9NZD8</id>
    </interactant>
    <interactant intactId="EBI-354451">
        <id>P39019</id>
        <label>RPS19</label>
    </interactant>
    <organismsDiffer>false</organismsDiffer>
    <experiments>3</experiments>
</comment>
<comment type="interaction">
    <interactant intactId="EBI-742688">
        <id>Q9NZD8</id>
    </interactant>
    <interactant intactId="EBI-10238588">
        <id>Q17RB0</id>
        <label>RTL8B</label>
    </interactant>
    <organismsDiffer>false</organismsDiffer>
    <experiments>3</experiments>
</comment>
<comment type="interaction">
    <interactant intactId="EBI-742688">
        <id>Q9NZD8</id>
    </interactant>
    <interactant intactId="EBI-458391">
        <id>P04271</id>
        <label>S100B</label>
    </interactant>
    <organismsDiffer>false</organismsDiffer>
    <experiments>7</experiments>
</comment>
<comment type="interaction">
    <interactant intactId="EBI-742688">
        <id>Q9NZD8</id>
    </interactant>
    <interactant intactId="EBI-743747">
        <id>Q01826</id>
        <label>SATB1</label>
    </interactant>
    <organismsDiffer>false</organismsDiffer>
    <experiments>3</experiments>
</comment>
<comment type="interaction">
    <interactant intactId="EBI-742688">
        <id>Q9NZD8</id>
    </interactant>
    <interactant intactId="EBI-954338">
        <id>O15126</id>
        <label>SCAMP1</label>
    </interactant>
    <organismsDiffer>false</organismsDiffer>
    <experiments>3</experiments>
</comment>
<comment type="interaction">
    <interactant intactId="EBI-742688">
        <id>Q9NZD8</id>
    </interactant>
    <interactant intactId="EBI-373345">
        <id>Q99719</id>
        <label>SEPTIN5</label>
    </interactant>
    <organismsDiffer>false</organismsDiffer>
    <experiments>3</experiments>
</comment>
<comment type="interaction">
    <interactant intactId="EBI-742688">
        <id>Q9NZD8</id>
    </interactant>
    <interactant intactId="EBI-2854842">
        <id>Q8WV19</id>
        <label>SFT2D1</label>
    </interactant>
    <organismsDiffer>false</organismsDiffer>
    <experiments>3</experiments>
</comment>
<comment type="interaction">
    <interactant intactId="EBI-742688">
        <id>Q9NZD8</id>
    </interactant>
    <interactant intactId="EBI-697911">
        <id>Q99961</id>
        <label>SH3GL1</label>
    </interactant>
    <organismsDiffer>false</organismsDiffer>
    <experiments>3</experiments>
</comment>
<comment type="interaction">
    <interactant intactId="EBI-742688">
        <id>Q9NZD8</id>
    </interactant>
    <interactant intactId="EBI-13389236">
        <id>Q7Z769</id>
        <label>SLC35E3</label>
    </interactant>
    <organismsDiffer>false</organismsDiffer>
    <experiments>3</experiments>
</comment>
<comment type="interaction">
    <interactant intactId="EBI-742688">
        <id>Q9NZD8</id>
    </interactant>
    <interactant intactId="EBI-741237">
        <id>O60504</id>
        <label>SORBS3</label>
    </interactant>
    <organismsDiffer>false</organismsDiffer>
    <experiments>3</experiments>
</comment>
<comment type="interaction">
    <interactant intactId="EBI-742688">
        <id>Q9NZD8</id>
    </interactant>
    <interactant intactId="EBI-12831628">
        <id>Q8WW14-2</id>
        <label>SPMIP5</label>
    </interactant>
    <organismsDiffer>false</organismsDiffer>
    <experiments>3</experiments>
</comment>
<comment type="interaction">
    <interactant intactId="EBI-742688">
        <id>Q9NZD8</id>
    </interactant>
    <interactant intactId="EBI-10269322">
        <id>Q8NCR6</id>
        <label>SPMIP6</label>
    </interactant>
    <organismsDiffer>false</organismsDiffer>
    <experiments>3</experiments>
</comment>
<comment type="interaction">
    <interactant intactId="EBI-742688">
        <id>Q9NZD8</id>
    </interactant>
    <interactant intactId="EBI-5235340">
        <id>Q7Z699</id>
        <label>SPRED1</label>
    </interactant>
    <organismsDiffer>false</organismsDiffer>
    <experiments>3</experiments>
</comment>
<comment type="interaction">
    <interactant intactId="EBI-742688">
        <id>Q9NZD8</id>
    </interactant>
    <interactant intactId="EBI-7082156">
        <id>Q7Z698</id>
        <label>SPRED2</label>
    </interactant>
    <organismsDiffer>false</organismsDiffer>
    <experiments>10</experiments>
</comment>
<comment type="interaction">
    <interactant intactId="EBI-742688">
        <id>Q9NZD8</id>
    </interactant>
    <interactant intactId="EBI-17766455">
        <id>A0A286YEY3</id>
        <label>SRGAP2B</label>
    </interactant>
    <organismsDiffer>false</organismsDiffer>
    <experiments>3</experiments>
</comment>
<comment type="interaction">
    <interactant intactId="EBI-742688">
        <id>Q9NZD8</id>
    </interactant>
    <interactant intactId="EBI-744719">
        <id>Q9BWG4</id>
        <label>SSBP4</label>
    </interactant>
    <organismsDiffer>false</organismsDiffer>
    <experiments>3</experiments>
</comment>
<comment type="interaction">
    <interactant intactId="EBI-742688">
        <id>Q9NZD8</id>
    </interactant>
    <interactant intactId="EBI-5281637">
        <id>Q6NVH7</id>
        <label>SWSAP1</label>
    </interactant>
    <organismsDiffer>false</organismsDiffer>
    <experiments>6</experiments>
</comment>
<comment type="interaction">
    <interactant intactId="EBI-742688">
        <id>Q9NZD8</id>
    </interactant>
    <interactant intactId="EBI-12187159">
        <id>O43759-2</id>
        <label>SYNGR1</label>
    </interactant>
    <organismsDiffer>false</organismsDiffer>
    <experiments>3</experiments>
</comment>
<comment type="interaction">
    <interactant intactId="EBI-742688">
        <id>Q9NZD8</id>
    </interactant>
    <interactant intactId="EBI-11321949">
        <id>O43761</id>
        <label>SYNGR3</label>
    </interactant>
    <organismsDiffer>false</organismsDiffer>
    <experiments>5</experiments>
</comment>
<comment type="interaction">
    <interactant intactId="EBI-742688">
        <id>Q9NZD8</id>
    </interactant>
    <interactant intactId="EBI-9071725">
        <id>P08247</id>
        <label>SYP</label>
    </interactant>
    <organismsDiffer>false</organismsDiffer>
    <experiments>3</experiments>
</comment>
<comment type="interaction">
    <interactant intactId="EBI-742688">
        <id>Q9NZD8</id>
    </interactant>
    <interactant intactId="EBI-722877">
        <id>Q99081</id>
        <label>TCF12</label>
    </interactant>
    <organismsDiffer>false</organismsDiffer>
    <experiments>4</experiments>
</comment>
<comment type="interaction">
    <interactant intactId="EBI-742688">
        <id>Q9NZD8</id>
    </interactant>
    <interactant intactId="EBI-533224">
        <id>P15884</id>
        <label>TCF4</label>
    </interactant>
    <organismsDiffer>false</organismsDiffer>
    <experiments>3</experiments>
</comment>
<comment type="interaction">
    <interactant intactId="EBI-742688">
        <id>Q9NZD8</id>
    </interactant>
    <interactant intactId="EBI-750487">
        <id>Q8WW24</id>
        <label>TEKT4</label>
    </interactant>
    <organismsDiffer>false</organismsDiffer>
    <experiments>3</experiments>
</comment>
<comment type="interaction">
    <interactant intactId="EBI-742688">
        <id>Q9NZD8</id>
    </interactant>
    <interactant intactId="EBI-357061">
        <id>Q92734</id>
        <label>TFG</label>
    </interactant>
    <organismsDiffer>false</organismsDiffer>
    <experiments>6</experiments>
</comment>
<comment type="interaction">
    <interactant intactId="EBI-742688">
        <id>Q9NZD8</id>
    </interactant>
    <interactant intactId="EBI-1105213">
        <id>Q9UBB9</id>
        <label>TFIP11</label>
    </interactant>
    <organismsDiffer>false</organismsDiffer>
    <experiments>3</experiments>
</comment>
<comment type="interaction">
    <interactant intactId="EBI-742688">
        <id>Q9NZD8</id>
    </interactant>
    <interactant intactId="EBI-11741437">
        <id>Q08117-2</id>
        <label>TLE5</label>
    </interactant>
    <organismsDiffer>false</organismsDiffer>
    <experiments>3</experiments>
</comment>
<comment type="interaction">
    <interactant intactId="EBI-742688">
        <id>Q9NZD8</id>
    </interactant>
    <interactant intactId="EBI-12876824">
        <id>Q9BTX3</id>
        <label>TMEM208</label>
    </interactant>
    <organismsDiffer>false</organismsDiffer>
    <experiments>3</experiments>
</comment>
<comment type="interaction">
    <interactant intactId="EBI-742688">
        <id>Q9NZD8</id>
    </interactant>
    <interactant intactId="EBI-11528917">
        <id>Q8WW34-2</id>
        <label>TMEM239</label>
    </interactant>
    <organismsDiffer>false</organismsDiffer>
    <experiments>3</experiments>
</comment>
<comment type="interaction">
    <interactant intactId="EBI-742688">
        <id>Q9NZD8</id>
    </interactant>
    <interactant intactId="EBI-12815137">
        <id>Q96NM4-3</id>
        <label>TOX2</label>
    </interactant>
    <organismsDiffer>false</organismsDiffer>
    <experiments>3</experiments>
</comment>
<comment type="interaction">
    <interactant intactId="EBI-742688">
        <id>Q9NZD8</id>
    </interactant>
    <interactant intactId="EBI-12124194">
        <id>P55327-2</id>
        <label>TPD52</label>
    </interactant>
    <organismsDiffer>false</organismsDiffer>
    <experiments>3</experiments>
</comment>
<comment type="interaction">
    <interactant intactId="EBI-742688">
        <id>Q9NZD8</id>
    </interactant>
    <interactant intactId="EBI-359224">
        <id>Q13077</id>
        <label>TRAF1</label>
    </interactant>
    <organismsDiffer>false</organismsDiffer>
    <experiments>6</experiments>
</comment>
<comment type="interaction">
    <interactant intactId="EBI-742688">
        <id>Q9NZD8</id>
    </interactant>
    <interactant intactId="EBI-355744">
        <id>Q12933</id>
        <label>TRAF2</label>
    </interactant>
    <organismsDiffer>false</organismsDiffer>
    <experiments>8</experiments>
</comment>
<comment type="interaction">
    <interactant intactId="EBI-742688">
        <id>Q9NZD8</id>
    </interactant>
    <interactant intactId="EBI-492476">
        <id>Q96RU7</id>
        <label>TRIB3</label>
    </interactant>
    <organismsDiffer>false</organismsDiffer>
    <experiments>3</experiments>
</comment>
<comment type="interaction">
    <interactant intactId="EBI-742688">
        <id>Q9NZD8</id>
    </interactant>
    <interactant intactId="EBI-2820256">
        <id>Q14142</id>
        <label>TRIM14</label>
    </interactant>
    <organismsDiffer>false</organismsDiffer>
    <experiments>3</experiments>
</comment>
<comment type="interaction">
    <interactant intactId="EBI-742688">
        <id>Q9NZD8</id>
    </interactant>
    <interactant intactId="EBI-740098">
        <id>P36406</id>
        <label>TRIM23</label>
    </interactant>
    <organismsDiffer>false</organismsDiffer>
    <experiments>3</experiments>
</comment>
<comment type="interaction">
    <interactant intactId="EBI-742688">
        <id>Q9NZD8</id>
    </interactant>
    <interactant intactId="EBI-9867283">
        <id>Q86XT4</id>
        <label>TRIM50</label>
    </interactant>
    <organismsDiffer>false</organismsDiffer>
    <experiments>3</experiments>
</comment>
<comment type="interaction">
    <interactant intactId="EBI-742688">
        <id>Q9NZD8</id>
    </interactant>
    <interactant intactId="EBI-2130429">
        <id>Q9BYV2</id>
        <label>TRIM54</label>
    </interactant>
    <organismsDiffer>false</organismsDiffer>
    <experiments>6</experiments>
</comment>
<comment type="interaction">
    <interactant intactId="EBI-742688">
        <id>Q9NZD8</id>
    </interactant>
    <interactant intactId="EBI-720828">
        <id>Q9C026</id>
        <label>TRIM9</label>
    </interactant>
    <organismsDiffer>false</organismsDiffer>
    <experiments>6</experiments>
</comment>
<comment type="interaction">
    <interactant intactId="EBI-742688">
        <id>Q9NZD8</id>
    </interactant>
    <interactant intactId="EBI-10241197">
        <id>Q3SY00</id>
        <label>TSGA10IP</label>
    </interactant>
    <organismsDiffer>false</organismsDiffer>
    <experiments>3</experiments>
</comment>
<comment type="interaction">
    <interactant intactId="EBI-742688">
        <id>Q9NZD8</id>
    </interactant>
    <interactant intactId="EBI-6872498">
        <id>Q2TAA8</id>
        <label>TSNAXIP1</label>
    </interactant>
    <organismsDiffer>false</organismsDiffer>
    <experiments>3</experiments>
</comment>
<comment type="interaction">
    <interactant intactId="EBI-742688">
        <id>Q9NZD8</id>
    </interactant>
    <interactant intactId="EBI-8656864">
        <id>Q6PF05</id>
        <label>TTC23L</label>
    </interactant>
    <organismsDiffer>false</organismsDiffer>
    <experiments>3</experiments>
</comment>
<comment type="interaction">
    <interactant intactId="EBI-742688">
        <id>Q9NZD8</id>
    </interactant>
    <interactant intactId="EBI-594644">
        <id>P10599</id>
        <label>TXN</label>
    </interactant>
    <organismsDiffer>false</organismsDiffer>
    <experiments>6</experiments>
</comment>
<comment type="interaction">
    <interactant intactId="EBI-742688">
        <id>Q9NZD8</id>
    </interactant>
    <interactant intactId="EBI-10309345">
        <id>Q9NX01</id>
        <label>TXNL4B</label>
    </interactant>
    <organismsDiffer>false</organismsDiffer>
    <experiments>6</experiments>
</comment>
<comment type="interaction">
    <interactant intactId="EBI-742688">
        <id>Q9NZD8</id>
    </interactant>
    <interactant intactId="EBI-12068150">
        <id>Q6NVU6</id>
        <label>UFSP1</label>
    </interactant>
    <organismsDiffer>false</organismsDiffer>
    <experiments>3</experiments>
</comment>
<comment type="interaction">
    <interactant intactId="EBI-742688">
        <id>Q9NZD8</id>
    </interactant>
    <interactant intactId="EBI-739895">
        <id>Q8N6Y0</id>
        <label>USHBP1</label>
    </interactant>
    <organismsDiffer>false</organismsDiffer>
    <experiments>3</experiments>
</comment>
<comment type="interaction">
    <interactant intactId="EBI-742688">
        <id>Q9NZD8</id>
    </interactant>
    <interactant intactId="EBI-2803134">
        <id>Q2NL98</id>
        <label>VMAC</label>
    </interactant>
    <organismsDiffer>false</organismsDiffer>
    <experiments>3</experiments>
</comment>
<comment type="interaction">
    <interactant intactId="EBI-742688">
        <id>Q9NZD8</id>
    </interactant>
    <interactant intactId="EBI-741945">
        <id>Q9BRG1</id>
        <label>VPS25</label>
    </interactant>
    <organismsDiffer>false</organismsDiffer>
    <experiments>3</experiments>
</comment>
<comment type="interaction">
    <interactant intactId="EBI-742688">
        <id>Q9NZD8</id>
    </interactant>
    <interactant intactId="EBI-12287587">
        <id>B2RXF5</id>
        <label>ZBTB42</label>
    </interactant>
    <organismsDiffer>false</organismsDiffer>
    <experiments>3</experiments>
</comment>
<comment type="interaction">
    <interactant intactId="EBI-742688">
        <id>Q9NZD8</id>
    </interactant>
    <interactant intactId="EBI-12030590">
        <id>Q9H0C1</id>
        <label>ZMYND12</label>
    </interactant>
    <organismsDiffer>false</organismsDiffer>
    <experiments>5</experiments>
</comment>
<comment type="interaction">
    <interactant intactId="EBI-742688">
        <id>Q9NZD8</id>
    </interactant>
    <interactant intactId="EBI-745520">
        <id>Q9P0T4</id>
        <label>ZNF581</label>
    </interactant>
    <organismsDiffer>false</organismsDiffer>
    <experiments>3</experiments>
</comment>
<comment type="interaction">
    <interactant intactId="EBI-742688">
        <id>Q9NZD8</id>
    </interactant>
    <interactant intactId="EBI-9977294">
        <id>Q9UEG4</id>
        <label>ZNF629</label>
    </interactant>
    <organismsDiffer>false</organismsDiffer>
    <experiments>3</experiments>
</comment>
<comment type="interaction">
    <interactant intactId="EBI-742688">
        <id>Q9NZD8</id>
    </interactant>
    <interactant intactId="EBI-9676218">
        <id>P03410</id>
        <label>tax</label>
    </interactant>
    <organismsDiffer>true</organismsDiffer>
    <experiments>3</experiments>
</comment>
<comment type="subcellular location">
    <subcellularLocation>
        <location evidence="2">Cytoplasm</location>
        <location evidence="2">Cytosol</location>
    </subcellularLocation>
    <subcellularLocation>
        <location evidence="2">Membrane</location>
        <topology evidence="2">Peripheral membrane protein</topology>
    </subcellularLocation>
    <subcellularLocation>
        <location evidence="2">Endosome membrane</location>
        <topology evidence="2">Peripheral membrane protein</topology>
    </subcellularLocation>
    <subcellularLocation>
        <location evidence="2">Golgi apparatus</location>
        <location evidence="2">trans-Golgi network membrane</location>
        <topology evidence="2">Peripheral membrane protein</topology>
    </subcellularLocation>
    <text>Partially localized in the cytosol but also accumulated on an intracellular vesicular compartment. Colocalizes with CD4 on endosomal/trans-Golgi network.</text>
</comment>
<comment type="alternative products">
    <event type="alternative splicing"/>
    <isoform>
        <id>Q9NZD8-1</id>
        <name>1</name>
        <sequence type="displayed"/>
    </isoform>
    <isoform>
        <id>Q9NZD8-2</id>
        <name>2</name>
        <sequence type="described" ref="VSP_041512"/>
    </isoform>
</comment>
<comment type="tissue specificity">
    <text evidence="2">Expressed in all tissues tested, including heart, brain, placenta, lung, liver, skeletal muscle, kidney and pancreas. Expressed in J.CaM1.6, HuT 78 and HeLa cell lines (at protein level).</text>
</comment>
<comment type="disease" evidence="3">
    <disease id="DI-01048">
        <name>Spastic paraplegia 21, autosomal recessive</name>
        <acronym>SPG21</acronym>
        <description>A form of spastic paraplegia, a neurodegenerative disorder characterized by a slow, gradual, progressive weakness and spasticity of the lower limbs. Rate of progression and the severity of symptoms are quite variable. Initial symptoms may include difficulty with balance, weakness and stiffness in the legs, muscle spasms, and dragging the toes when walking. In some forms of the disorder, bladder symptoms (such as incontinence) may appear, or the weakness and stiffness may spread to other parts of the body. SPG21 is associated with dementia and other central nervous system abnormalities. Subtle childhood abnormalities may be present, but the main features develop in early adulthood. The disease is slowly progressive, and cerebellar and extrapyramidal signs are also found in patients with advanced disease. Patients have a thin corpus callosum and white-matter abnormalities.</description>
        <dbReference type="MIM" id="248900"/>
    </disease>
    <text>The disease is caused by variants affecting the gene represented in this entry.</text>
</comment>
<comment type="similarity">
    <text evidence="6">Belongs to the AB hydrolase superfamily.</text>
</comment>
<gene>
    <name type="primary">SPG21</name>
    <name type="synonym">ACP33</name>
    <name type="ORF">BM-019</name>
    <name type="ORF">GL010</name>
</gene>
<reference key="1">
    <citation type="journal article" date="2001" name="J. Biol. Chem.">
        <title>Cloning of ACP33 as a novel intracellular ligand of CD4.</title>
        <authorList>
            <person name="Zeitlmann L."/>
            <person name="Sirim P."/>
            <person name="Kremmer E."/>
            <person name="Kolanus W."/>
        </authorList>
    </citation>
    <scope>NUCLEOTIDE SEQUENCE [MRNA] (ISOFORM 1)</scope>
    <scope>FUNCTION</scope>
    <scope>TISSUE SPECIFICITY</scope>
    <scope>SUBCELLULAR LOCATION</scope>
    <scope>INTERACTION WITH CD4</scope>
    <scope>MUTAGENESIS OF SER-109</scope>
</reference>
<reference key="2">
    <citation type="submission" date="1999-11" db="EMBL/GenBank/DDBJ databases">
        <title>A novel gene expressed in human bone marrow.</title>
        <authorList>
            <person name="Zhao M."/>
            <person name="Song H."/>
            <person name="Li N."/>
            <person name="Peng Y."/>
            <person name="Han Z."/>
            <person name="Chen Z."/>
        </authorList>
    </citation>
    <scope>NUCLEOTIDE SEQUENCE [LARGE SCALE MRNA] (ISOFORM 1)</scope>
    <source>
        <tissue>Bone marrow</tissue>
    </source>
</reference>
<reference key="3">
    <citation type="submission" date="1999-12" db="EMBL/GenBank/DDBJ databases">
        <title>A novel gene expressed in human liver non-tumor tissues.</title>
        <authorList>
            <person name="Li Y."/>
            <person name="Wu T."/>
            <person name="Xu S."/>
            <person name="Ren S."/>
            <person name="Chen Z."/>
            <person name="Han Z."/>
        </authorList>
    </citation>
    <scope>NUCLEOTIDE SEQUENCE [LARGE SCALE MRNA] (ISOFORM 1)</scope>
    <source>
        <tissue>Liver</tissue>
    </source>
</reference>
<reference key="4">
    <citation type="journal article" date="2004" name="Nat. Genet.">
        <title>Complete sequencing and characterization of 21,243 full-length human cDNAs.</title>
        <authorList>
            <person name="Ota T."/>
            <person name="Suzuki Y."/>
            <person name="Nishikawa T."/>
            <person name="Otsuki T."/>
            <person name="Sugiyama T."/>
            <person name="Irie R."/>
            <person name="Wakamatsu A."/>
            <person name="Hayashi K."/>
            <person name="Sato H."/>
            <person name="Nagai K."/>
            <person name="Kimura K."/>
            <person name="Makita H."/>
            <person name="Sekine M."/>
            <person name="Obayashi M."/>
            <person name="Nishi T."/>
            <person name="Shibahara T."/>
            <person name="Tanaka T."/>
            <person name="Ishii S."/>
            <person name="Yamamoto J."/>
            <person name="Saito K."/>
            <person name="Kawai Y."/>
            <person name="Isono Y."/>
            <person name="Nakamura Y."/>
            <person name="Nagahari K."/>
            <person name="Murakami K."/>
            <person name="Yasuda T."/>
            <person name="Iwayanagi T."/>
            <person name="Wagatsuma M."/>
            <person name="Shiratori A."/>
            <person name="Sudo H."/>
            <person name="Hosoiri T."/>
            <person name="Kaku Y."/>
            <person name="Kodaira H."/>
            <person name="Kondo H."/>
            <person name="Sugawara M."/>
            <person name="Takahashi M."/>
            <person name="Kanda K."/>
            <person name="Yokoi T."/>
            <person name="Furuya T."/>
            <person name="Kikkawa E."/>
            <person name="Omura Y."/>
            <person name="Abe K."/>
            <person name="Kamihara K."/>
            <person name="Katsuta N."/>
            <person name="Sato K."/>
            <person name="Tanikawa M."/>
            <person name="Yamazaki M."/>
            <person name="Ninomiya K."/>
            <person name="Ishibashi T."/>
            <person name="Yamashita H."/>
            <person name="Murakawa K."/>
            <person name="Fujimori K."/>
            <person name="Tanai H."/>
            <person name="Kimata M."/>
            <person name="Watanabe M."/>
            <person name="Hiraoka S."/>
            <person name="Chiba Y."/>
            <person name="Ishida S."/>
            <person name="Ono Y."/>
            <person name="Takiguchi S."/>
            <person name="Watanabe S."/>
            <person name="Yosida M."/>
            <person name="Hotuta T."/>
            <person name="Kusano J."/>
            <person name="Kanehori K."/>
            <person name="Takahashi-Fujii A."/>
            <person name="Hara H."/>
            <person name="Tanase T.-O."/>
            <person name="Nomura Y."/>
            <person name="Togiya S."/>
            <person name="Komai F."/>
            <person name="Hara R."/>
            <person name="Takeuchi K."/>
            <person name="Arita M."/>
            <person name="Imose N."/>
            <person name="Musashino K."/>
            <person name="Yuuki H."/>
            <person name="Oshima A."/>
            <person name="Sasaki N."/>
            <person name="Aotsuka S."/>
            <person name="Yoshikawa Y."/>
            <person name="Matsunawa H."/>
            <person name="Ichihara T."/>
            <person name="Shiohata N."/>
            <person name="Sano S."/>
            <person name="Moriya S."/>
            <person name="Momiyama H."/>
            <person name="Satoh N."/>
            <person name="Takami S."/>
            <person name="Terashima Y."/>
            <person name="Suzuki O."/>
            <person name="Nakagawa S."/>
            <person name="Senoh A."/>
            <person name="Mizoguchi H."/>
            <person name="Goto Y."/>
            <person name="Shimizu F."/>
            <person name="Wakebe H."/>
            <person name="Hishigaki H."/>
            <person name="Watanabe T."/>
            <person name="Sugiyama A."/>
            <person name="Takemoto M."/>
            <person name="Kawakami B."/>
            <person name="Yamazaki M."/>
            <person name="Watanabe K."/>
            <person name="Kumagai A."/>
            <person name="Itakura S."/>
            <person name="Fukuzumi Y."/>
            <person name="Fujimori Y."/>
            <person name="Komiyama M."/>
            <person name="Tashiro H."/>
            <person name="Tanigami A."/>
            <person name="Fujiwara T."/>
            <person name="Ono T."/>
            <person name="Yamada K."/>
            <person name="Fujii Y."/>
            <person name="Ozaki K."/>
            <person name="Hirao M."/>
            <person name="Ohmori Y."/>
            <person name="Kawabata A."/>
            <person name="Hikiji T."/>
            <person name="Kobatake N."/>
            <person name="Inagaki H."/>
            <person name="Ikema Y."/>
            <person name="Okamoto S."/>
            <person name="Okitani R."/>
            <person name="Kawakami T."/>
            <person name="Noguchi S."/>
            <person name="Itoh T."/>
            <person name="Shigeta K."/>
            <person name="Senba T."/>
            <person name="Matsumura K."/>
            <person name="Nakajima Y."/>
            <person name="Mizuno T."/>
            <person name="Morinaga M."/>
            <person name="Sasaki M."/>
            <person name="Togashi T."/>
            <person name="Oyama M."/>
            <person name="Hata H."/>
            <person name="Watanabe M."/>
            <person name="Komatsu T."/>
            <person name="Mizushima-Sugano J."/>
            <person name="Satoh T."/>
            <person name="Shirai Y."/>
            <person name="Takahashi Y."/>
            <person name="Nakagawa K."/>
            <person name="Okumura K."/>
            <person name="Nagase T."/>
            <person name="Nomura N."/>
            <person name="Kikuchi H."/>
            <person name="Masuho Y."/>
            <person name="Yamashita R."/>
            <person name="Nakai K."/>
            <person name="Yada T."/>
            <person name="Nakamura Y."/>
            <person name="Ohara O."/>
            <person name="Isogai T."/>
            <person name="Sugano S."/>
        </authorList>
    </citation>
    <scope>NUCLEOTIDE SEQUENCE [LARGE SCALE MRNA] (ISOFORMS 1 AND 2)</scope>
    <source>
        <tissue>Synovium</tissue>
    </source>
</reference>
<reference key="5">
    <citation type="journal article" date="2006" name="Nature">
        <title>Analysis of the DNA sequence and duplication history of human chromosome 15.</title>
        <authorList>
            <person name="Zody M.C."/>
            <person name="Garber M."/>
            <person name="Sharpe T."/>
            <person name="Young S.K."/>
            <person name="Rowen L."/>
            <person name="O'Neill K."/>
            <person name="Whittaker C.A."/>
            <person name="Kamal M."/>
            <person name="Chang J.L."/>
            <person name="Cuomo C.A."/>
            <person name="Dewar K."/>
            <person name="FitzGerald M.G."/>
            <person name="Kodira C.D."/>
            <person name="Madan A."/>
            <person name="Qin S."/>
            <person name="Yang X."/>
            <person name="Abbasi N."/>
            <person name="Abouelleil A."/>
            <person name="Arachchi H.M."/>
            <person name="Baradarani L."/>
            <person name="Birditt B."/>
            <person name="Bloom S."/>
            <person name="Bloom T."/>
            <person name="Borowsky M.L."/>
            <person name="Burke J."/>
            <person name="Butler J."/>
            <person name="Cook A."/>
            <person name="DeArellano K."/>
            <person name="DeCaprio D."/>
            <person name="Dorris L. III"/>
            <person name="Dors M."/>
            <person name="Eichler E.E."/>
            <person name="Engels R."/>
            <person name="Fahey J."/>
            <person name="Fleetwood P."/>
            <person name="Friedman C."/>
            <person name="Gearin G."/>
            <person name="Hall J.L."/>
            <person name="Hensley G."/>
            <person name="Johnson E."/>
            <person name="Jones C."/>
            <person name="Kamat A."/>
            <person name="Kaur A."/>
            <person name="Locke D.P."/>
            <person name="Madan A."/>
            <person name="Munson G."/>
            <person name="Jaffe D.B."/>
            <person name="Lui A."/>
            <person name="Macdonald P."/>
            <person name="Mauceli E."/>
            <person name="Naylor J.W."/>
            <person name="Nesbitt R."/>
            <person name="Nicol R."/>
            <person name="O'Leary S.B."/>
            <person name="Ratcliffe A."/>
            <person name="Rounsley S."/>
            <person name="She X."/>
            <person name="Sneddon K.M.B."/>
            <person name="Stewart S."/>
            <person name="Sougnez C."/>
            <person name="Stone S.M."/>
            <person name="Topham K."/>
            <person name="Vincent D."/>
            <person name="Wang S."/>
            <person name="Zimmer A.R."/>
            <person name="Birren B.W."/>
            <person name="Hood L."/>
            <person name="Lander E.S."/>
            <person name="Nusbaum C."/>
        </authorList>
    </citation>
    <scope>NUCLEOTIDE SEQUENCE [LARGE SCALE GENOMIC DNA]</scope>
</reference>
<reference key="6">
    <citation type="submission" date="2005-07" db="EMBL/GenBank/DDBJ databases">
        <authorList>
            <person name="Mural R.J."/>
            <person name="Istrail S."/>
            <person name="Sutton G.G."/>
            <person name="Florea L."/>
            <person name="Halpern A.L."/>
            <person name="Mobarry C.M."/>
            <person name="Lippert R."/>
            <person name="Walenz B."/>
            <person name="Shatkay H."/>
            <person name="Dew I."/>
            <person name="Miller J.R."/>
            <person name="Flanigan M.J."/>
            <person name="Edwards N.J."/>
            <person name="Bolanos R."/>
            <person name="Fasulo D."/>
            <person name="Halldorsson B.V."/>
            <person name="Hannenhalli S."/>
            <person name="Turner R."/>
            <person name="Yooseph S."/>
            <person name="Lu F."/>
            <person name="Nusskern D.R."/>
            <person name="Shue B.C."/>
            <person name="Zheng X.H."/>
            <person name="Zhong F."/>
            <person name="Delcher A.L."/>
            <person name="Huson D.H."/>
            <person name="Kravitz S.A."/>
            <person name="Mouchard L."/>
            <person name="Reinert K."/>
            <person name="Remington K.A."/>
            <person name="Clark A.G."/>
            <person name="Waterman M.S."/>
            <person name="Eichler E.E."/>
            <person name="Adams M.D."/>
            <person name="Hunkapiller M.W."/>
            <person name="Myers E.W."/>
            <person name="Venter J.C."/>
        </authorList>
    </citation>
    <scope>NUCLEOTIDE SEQUENCE [LARGE SCALE GENOMIC DNA]</scope>
</reference>
<reference key="7">
    <citation type="journal article" date="2004" name="Genome Res.">
        <title>The status, quality, and expansion of the NIH full-length cDNA project: the Mammalian Gene Collection (MGC).</title>
        <authorList>
            <consortium name="The MGC Project Team"/>
        </authorList>
    </citation>
    <scope>NUCLEOTIDE SEQUENCE [LARGE SCALE MRNA] (ISOFORM 1)</scope>
    <source>
        <tissue>Eye</tissue>
    </source>
</reference>
<reference key="8">
    <citation type="journal article" date="2003" name="Am. J. Hum. Genet.">
        <title>Maspardin is mutated in Mast syndrome, a complicated form of hereditary spastic paraplegia associated with dementia.</title>
        <authorList>
            <person name="Simpson M.A."/>
            <person name="Cross H."/>
            <person name="Proukakis C."/>
            <person name="Pryde A."/>
            <person name="Hershberger R."/>
            <person name="Chatonnet A."/>
            <person name="Patton M.A."/>
            <person name="Crosby A.H."/>
        </authorList>
    </citation>
    <scope>INVOLVEMENT IN SPG21</scope>
</reference>
<reference key="9">
    <citation type="journal article" date="2009" name="Anal. Chem.">
        <title>Lys-N and trypsin cover complementary parts of the phosphoproteome in a refined SCX-based approach.</title>
        <authorList>
            <person name="Gauci S."/>
            <person name="Helbig A.O."/>
            <person name="Slijper M."/>
            <person name="Krijgsveld J."/>
            <person name="Heck A.J."/>
            <person name="Mohammed S."/>
        </authorList>
    </citation>
    <scope>IDENTIFICATION BY MASS SPECTROMETRY [LARGE SCALE ANALYSIS]</scope>
</reference>
<reference key="10">
    <citation type="journal article" date="2009" name="Neurogenetics">
        <title>Interaction of the SPG21 protein ACP33/maspardin with the aldehyde dehydrogenase ALDH16A1.</title>
        <authorList>
            <person name="Hanna M.C."/>
            <person name="Blackstone C."/>
        </authorList>
    </citation>
    <scope>INTERACTION WITH ALDH16A1</scope>
</reference>
<reference key="11">
    <citation type="journal article" date="2010" name="Sci. Signal.">
        <title>Quantitative phosphoproteomics reveals widespread full phosphorylation site occupancy during mitosis.</title>
        <authorList>
            <person name="Olsen J.V."/>
            <person name="Vermeulen M."/>
            <person name="Santamaria A."/>
            <person name="Kumar C."/>
            <person name="Miller M.L."/>
            <person name="Jensen L.J."/>
            <person name="Gnad F."/>
            <person name="Cox J."/>
            <person name="Jensen T.S."/>
            <person name="Nigg E.A."/>
            <person name="Brunak S."/>
            <person name="Mann M."/>
        </authorList>
    </citation>
    <scope>PHOSPHORYLATION [LARGE SCALE ANALYSIS] AT SER-304</scope>
    <scope>IDENTIFICATION BY MASS SPECTROMETRY [LARGE SCALE ANALYSIS]</scope>
    <source>
        <tissue>Cervix carcinoma</tissue>
    </source>
</reference>
<reference key="12">
    <citation type="journal article" date="2011" name="BMC Syst. Biol.">
        <title>Initial characterization of the human central proteome.</title>
        <authorList>
            <person name="Burkard T.R."/>
            <person name="Planyavsky M."/>
            <person name="Kaupe I."/>
            <person name="Breitwieser F.P."/>
            <person name="Buerckstuemmer T."/>
            <person name="Bennett K.L."/>
            <person name="Superti-Furga G."/>
            <person name="Colinge J."/>
        </authorList>
    </citation>
    <scope>IDENTIFICATION BY MASS SPECTROMETRY [LARGE SCALE ANALYSIS]</scope>
</reference>
<protein>
    <recommendedName>
        <fullName>Maspardin</fullName>
    </recommendedName>
    <alternativeName>
        <fullName>Acid cluster protein 33</fullName>
    </alternativeName>
    <alternativeName>
        <fullName>Spastic paraplegia 21 autosomal recessive Mast syndrome protein</fullName>
    </alternativeName>
    <alternativeName>
        <fullName>Spastic paraplegia 21 protein</fullName>
    </alternativeName>
</protein>
<feature type="chain" id="PRO_0000227980" description="Maspardin">
    <location>
        <begin position="1"/>
        <end position="308"/>
    </location>
</feature>
<feature type="domain" description="AB hydrolase-1" evidence="1">
    <location>
        <begin position="87"/>
        <end position="159"/>
    </location>
</feature>
<feature type="modified residue" description="Phosphoserine" evidence="7">
    <location>
        <position position="304"/>
    </location>
</feature>
<feature type="splice variant" id="VSP_041512" description="In isoform 2." evidence="5">
    <location>
        <begin position="76"/>
        <end position="102"/>
    </location>
</feature>
<feature type="mutagenesis site" description="Abolishes interaction with CD4." evidence="2">
    <original>S</original>
    <variation>A</variation>
    <location>
        <position position="109"/>
    </location>
</feature>
<feature type="sequence conflict" description="In Ref. 4; BAG62906." evidence="6" ref="4">
    <original>R</original>
    <variation>Q</variation>
    <location>
        <position position="40"/>
    </location>
</feature>
<feature type="sequence conflict" description="In Ref. 4; BAG62906." evidence="6" ref="4">
    <original>V</original>
    <variation>A</variation>
    <location>
        <position position="58"/>
    </location>
</feature>
<feature type="sequence conflict" description="In Ref. 4; BAD18813." evidence="6" ref="4">
    <original>E</original>
    <variation>V</variation>
    <location>
        <position position="210"/>
    </location>
</feature>
<dbReference type="EMBL" id="AF208861">
    <property type="protein sequence ID" value="AAF64275.1"/>
    <property type="molecule type" value="mRNA"/>
</dbReference>
<dbReference type="EMBL" id="AF212231">
    <property type="protein sequence ID" value="AAK14917.1"/>
    <property type="molecule type" value="mRNA"/>
</dbReference>
<dbReference type="EMBL" id="AK172849">
    <property type="protein sequence ID" value="BAD18813.1"/>
    <property type="molecule type" value="mRNA"/>
</dbReference>
<dbReference type="EMBL" id="AK301362">
    <property type="protein sequence ID" value="BAG62906.1"/>
    <property type="molecule type" value="mRNA"/>
</dbReference>
<dbReference type="EMBL" id="AC069368">
    <property type="status" value="NOT_ANNOTATED_CDS"/>
    <property type="molecule type" value="Genomic_DNA"/>
</dbReference>
<dbReference type="EMBL" id="AC103691">
    <property type="status" value="NOT_ANNOTATED_CDS"/>
    <property type="molecule type" value="Genomic_DNA"/>
</dbReference>
<dbReference type="EMBL" id="CH471082">
    <property type="protein sequence ID" value="EAW77704.1"/>
    <property type="molecule type" value="Genomic_DNA"/>
</dbReference>
<dbReference type="EMBL" id="BC000244">
    <property type="protein sequence ID" value="AAH00244.1"/>
    <property type="molecule type" value="mRNA"/>
</dbReference>
<dbReference type="CCDS" id="CCDS10198.1">
    <molecule id="Q9NZD8-1"/>
</dbReference>
<dbReference type="CCDS" id="CCDS45279.1">
    <molecule id="Q9NZD8-2"/>
</dbReference>
<dbReference type="RefSeq" id="NP_001121361.1">
    <molecule id="Q9NZD8-1"/>
    <property type="nucleotide sequence ID" value="NM_001127889.5"/>
</dbReference>
<dbReference type="RefSeq" id="NP_001121362.1">
    <molecule id="Q9NZD8-2"/>
    <property type="nucleotide sequence ID" value="NM_001127890.5"/>
</dbReference>
<dbReference type="RefSeq" id="NP_057714.1">
    <molecule id="Q9NZD8-1"/>
    <property type="nucleotide sequence ID" value="NM_016630.7"/>
</dbReference>
<dbReference type="RefSeq" id="XP_005254494.1">
    <property type="nucleotide sequence ID" value="XM_005254437.4"/>
</dbReference>
<dbReference type="RefSeq" id="XP_016877786.1">
    <property type="nucleotide sequence ID" value="XM_017022297.1"/>
</dbReference>
<dbReference type="RefSeq" id="XP_016877787.1">
    <property type="nucleotide sequence ID" value="XM_017022298.1"/>
</dbReference>
<dbReference type="SMR" id="Q9NZD8"/>
<dbReference type="BioGRID" id="119474">
    <property type="interactions" value="208"/>
</dbReference>
<dbReference type="FunCoup" id="Q9NZD8">
    <property type="interactions" value="2455"/>
</dbReference>
<dbReference type="IntAct" id="Q9NZD8">
    <property type="interactions" value="184"/>
</dbReference>
<dbReference type="MINT" id="Q9NZD8"/>
<dbReference type="STRING" id="9606.ENSP00000204566"/>
<dbReference type="ESTHER" id="human-SPG21">
    <property type="family name" value="Maspardin-ACP33-SPG21_like"/>
</dbReference>
<dbReference type="iPTMnet" id="Q9NZD8"/>
<dbReference type="PhosphoSitePlus" id="Q9NZD8"/>
<dbReference type="SwissPalm" id="Q9NZD8"/>
<dbReference type="BioMuta" id="SPG21"/>
<dbReference type="DMDM" id="74734726"/>
<dbReference type="jPOST" id="Q9NZD8"/>
<dbReference type="MassIVE" id="Q9NZD8"/>
<dbReference type="PaxDb" id="9606-ENSP00000204566"/>
<dbReference type="PeptideAtlas" id="Q9NZD8"/>
<dbReference type="ProteomicsDB" id="83377">
    <molecule id="Q9NZD8-1"/>
</dbReference>
<dbReference type="ProteomicsDB" id="83378">
    <molecule id="Q9NZD8-2"/>
</dbReference>
<dbReference type="Pumba" id="Q9NZD8"/>
<dbReference type="Antibodypedia" id="25890">
    <property type="antibodies" value="106 antibodies from 19 providers"/>
</dbReference>
<dbReference type="DNASU" id="51324"/>
<dbReference type="Ensembl" id="ENST00000204566.7">
    <molecule id="Q9NZD8-1"/>
    <property type="protein sequence ID" value="ENSP00000204566.2"/>
    <property type="gene ID" value="ENSG00000090487.11"/>
</dbReference>
<dbReference type="Ensembl" id="ENST00000416889.6">
    <molecule id="Q9NZD8-2"/>
    <property type="protein sequence ID" value="ENSP00000394846.2"/>
    <property type="gene ID" value="ENSG00000090487.11"/>
</dbReference>
<dbReference type="Ensembl" id="ENST00000433215.6">
    <molecule id="Q9NZD8-1"/>
    <property type="protein sequence ID" value="ENSP00000404111.2"/>
    <property type="gene ID" value="ENSG00000090487.11"/>
</dbReference>
<dbReference type="GeneID" id="51324"/>
<dbReference type="KEGG" id="hsa:51324"/>
<dbReference type="MANE-Select" id="ENST00000204566.7">
    <property type="protein sequence ID" value="ENSP00000204566.2"/>
    <property type="RefSeq nucleotide sequence ID" value="NM_016630.7"/>
    <property type="RefSeq protein sequence ID" value="NP_057714.1"/>
</dbReference>
<dbReference type="UCSC" id="uc002aod.5">
    <molecule id="Q9NZD8-1"/>
    <property type="organism name" value="human"/>
</dbReference>
<dbReference type="AGR" id="HGNC:20373"/>
<dbReference type="CTD" id="51324"/>
<dbReference type="DisGeNET" id="51324"/>
<dbReference type="GeneCards" id="SPG21"/>
<dbReference type="HGNC" id="HGNC:20373">
    <property type="gene designation" value="SPG21"/>
</dbReference>
<dbReference type="HPA" id="ENSG00000090487">
    <property type="expression patterns" value="Low tissue specificity"/>
</dbReference>
<dbReference type="MalaCards" id="SPG21"/>
<dbReference type="MIM" id="248900">
    <property type="type" value="phenotype"/>
</dbReference>
<dbReference type="MIM" id="608181">
    <property type="type" value="gene"/>
</dbReference>
<dbReference type="neXtProt" id="NX_Q9NZD8"/>
<dbReference type="OpenTargets" id="ENSG00000090487"/>
<dbReference type="Orphanet" id="101001">
    <property type="disease" value="Autosomal recessive spastic paraplegia type 21"/>
</dbReference>
<dbReference type="PharmGKB" id="PA134921126"/>
<dbReference type="VEuPathDB" id="HostDB:ENSG00000090487"/>
<dbReference type="eggNOG" id="ENOG502QPSD">
    <property type="taxonomic scope" value="Eukaryota"/>
</dbReference>
<dbReference type="GeneTree" id="ENSGT00390000007857"/>
<dbReference type="HOGENOM" id="CLU_052260_0_0_1"/>
<dbReference type="InParanoid" id="Q9NZD8"/>
<dbReference type="OMA" id="CYVQPQK"/>
<dbReference type="OrthoDB" id="10264550at2759"/>
<dbReference type="PAN-GO" id="Q9NZD8">
    <property type="GO annotations" value="3 GO annotations based on evolutionary models"/>
</dbReference>
<dbReference type="PhylomeDB" id="Q9NZD8"/>
<dbReference type="TreeFam" id="TF105253"/>
<dbReference type="PathwayCommons" id="Q9NZD8"/>
<dbReference type="SignaLink" id="Q9NZD8"/>
<dbReference type="BioGRID-ORCS" id="51324">
    <property type="hits" value="58 hits in 1161 CRISPR screens"/>
</dbReference>
<dbReference type="ChiTaRS" id="SPG21">
    <property type="organism name" value="human"/>
</dbReference>
<dbReference type="GeneWiki" id="SPG21"/>
<dbReference type="GenomeRNAi" id="51324"/>
<dbReference type="Pharos" id="Q9NZD8">
    <property type="development level" value="Tbio"/>
</dbReference>
<dbReference type="PRO" id="PR:Q9NZD8"/>
<dbReference type="Proteomes" id="UP000005640">
    <property type="component" value="Chromosome 15"/>
</dbReference>
<dbReference type="RNAct" id="Q9NZD8">
    <property type="molecule type" value="protein"/>
</dbReference>
<dbReference type="Bgee" id="ENSG00000090487">
    <property type="expression patterns" value="Expressed in corpus epididymis and 207 other cell types or tissues"/>
</dbReference>
<dbReference type="ExpressionAtlas" id="Q9NZD8">
    <property type="expression patterns" value="baseline and differential"/>
</dbReference>
<dbReference type="GO" id="GO:0005829">
    <property type="term" value="C:cytosol"/>
    <property type="evidence" value="ECO:0000314"/>
    <property type="project" value="HPA"/>
</dbReference>
<dbReference type="GO" id="GO:0010008">
    <property type="term" value="C:endosome membrane"/>
    <property type="evidence" value="ECO:0007669"/>
    <property type="project" value="UniProtKB-SubCell"/>
</dbReference>
<dbReference type="GO" id="GO:0005794">
    <property type="term" value="C:Golgi apparatus"/>
    <property type="evidence" value="ECO:0007669"/>
    <property type="project" value="UniProtKB-SubCell"/>
</dbReference>
<dbReference type="GO" id="GO:0043231">
    <property type="term" value="C:intracellular membrane-bounded organelle"/>
    <property type="evidence" value="ECO:0000314"/>
    <property type="project" value="HPA"/>
</dbReference>
<dbReference type="GO" id="GO:0030140">
    <property type="term" value="C:trans-Golgi network transport vesicle"/>
    <property type="evidence" value="ECO:0000314"/>
    <property type="project" value="UniProtKB"/>
</dbReference>
<dbReference type="GO" id="GO:0042609">
    <property type="term" value="F:CD4 receptor binding"/>
    <property type="evidence" value="ECO:0000353"/>
    <property type="project" value="UniProtKB"/>
</dbReference>
<dbReference type="GO" id="GO:0050851">
    <property type="term" value="P:antigen receptor-mediated signaling pathway"/>
    <property type="evidence" value="ECO:0000305"/>
    <property type="project" value="UniProtKB"/>
</dbReference>
<dbReference type="GO" id="GO:0048668">
    <property type="term" value="P:collateral sprouting"/>
    <property type="evidence" value="ECO:0007669"/>
    <property type="project" value="Ensembl"/>
</dbReference>
<dbReference type="GO" id="GO:0007173">
    <property type="term" value="P:epidermal growth factor receptor signaling pathway"/>
    <property type="evidence" value="ECO:0007669"/>
    <property type="project" value="Ensembl"/>
</dbReference>
<dbReference type="GO" id="GO:0010467">
    <property type="term" value="P:gene expression"/>
    <property type="evidence" value="ECO:0007669"/>
    <property type="project" value="Ensembl"/>
</dbReference>
<dbReference type="GO" id="GO:0060173">
    <property type="term" value="P:limb development"/>
    <property type="evidence" value="ECO:0007669"/>
    <property type="project" value="Ensembl"/>
</dbReference>
<dbReference type="GO" id="GO:0007626">
    <property type="term" value="P:locomotory behavior"/>
    <property type="evidence" value="ECO:0007669"/>
    <property type="project" value="Ensembl"/>
</dbReference>
<dbReference type="GO" id="GO:0050905">
    <property type="term" value="P:neuromuscular process"/>
    <property type="evidence" value="ECO:0007669"/>
    <property type="project" value="Ensembl"/>
</dbReference>
<dbReference type="GO" id="GO:0042551">
    <property type="term" value="P:neuron maturation"/>
    <property type="evidence" value="ECO:0007669"/>
    <property type="project" value="Ensembl"/>
</dbReference>
<dbReference type="GO" id="GO:0070849">
    <property type="term" value="P:response to epidermal growth factor"/>
    <property type="evidence" value="ECO:0007669"/>
    <property type="project" value="Ensembl"/>
</dbReference>
<dbReference type="FunFam" id="3.40.50.1820:FF:000040">
    <property type="entry name" value="SPG21, maspardin"/>
    <property type="match status" value="1"/>
</dbReference>
<dbReference type="Gene3D" id="3.40.50.1820">
    <property type="entry name" value="alpha/beta hydrolase"/>
    <property type="match status" value="1"/>
</dbReference>
<dbReference type="InterPro" id="IPR000073">
    <property type="entry name" value="AB_hydrolase_1"/>
</dbReference>
<dbReference type="InterPro" id="IPR029058">
    <property type="entry name" value="AB_hydrolase_fold"/>
</dbReference>
<dbReference type="InterPro" id="IPR026151">
    <property type="entry name" value="Maspardin"/>
</dbReference>
<dbReference type="PANTHER" id="PTHR15913">
    <property type="entry name" value="ACID CLUSTER PROTEIN 33"/>
    <property type="match status" value="1"/>
</dbReference>
<dbReference type="PANTHER" id="PTHR15913:SF0">
    <property type="entry name" value="MASPARDIN"/>
    <property type="match status" value="1"/>
</dbReference>
<dbReference type="Pfam" id="PF00561">
    <property type="entry name" value="Abhydrolase_1"/>
    <property type="match status" value="1"/>
</dbReference>
<dbReference type="SUPFAM" id="SSF53474">
    <property type="entry name" value="alpha/beta-Hydrolases"/>
    <property type="match status" value="1"/>
</dbReference>
<proteinExistence type="evidence at protein level"/>
<sequence length="308" mass="34960">MGEIKVSPDYNWFRGTVPLKKIIVDDDDSKIWSLYDAGPRSIRCPLIFLPPVSGTADVFFRQILALTGWGYRVIALQYPVYWDHLEFCDGFRKLLDHLQLDKVHLFGASLGGFLAQKFAEYTHKSPRVHSLILCNSFSDTSIFNQTWTANSFWLMPAFMLKKIVLGNFSSGPVDPMMADAIDFMVDRLESLGQSELASRLTLNCQNSYVEPHKIRDIPVTIMDVFDQSALSTEAKEEMYKLYPNARRAHLKTGGNFPYLCRSAEVNLYVQIHLLQFHGTKYAAIDPSMVSAEELEVQKGSLGISQEEQ</sequence>
<organism>
    <name type="scientific">Homo sapiens</name>
    <name type="common">Human</name>
    <dbReference type="NCBI Taxonomy" id="9606"/>
    <lineage>
        <taxon>Eukaryota</taxon>
        <taxon>Metazoa</taxon>
        <taxon>Chordata</taxon>
        <taxon>Craniata</taxon>
        <taxon>Vertebrata</taxon>
        <taxon>Euteleostomi</taxon>
        <taxon>Mammalia</taxon>
        <taxon>Eutheria</taxon>
        <taxon>Euarchontoglires</taxon>
        <taxon>Primates</taxon>
        <taxon>Haplorrhini</taxon>
        <taxon>Catarrhini</taxon>
        <taxon>Hominidae</taxon>
        <taxon>Homo</taxon>
    </lineage>
</organism>